<accession>B2TIZ7</accession>
<reference key="1">
    <citation type="submission" date="2008-04" db="EMBL/GenBank/DDBJ databases">
        <title>Complete sequence of Clostridium botulinum strain Eklund.</title>
        <authorList>
            <person name="Brinkac L.M."/>
            <person name="Brown J.L."/>
            <person name="Bruce D."/>
            <person name="Detter C."/>
            <person name="Munk C."/>
            <person name="Smith L.A."/>
            <person name="Smith T.J."/>
            <person name="Sutton G."/>
            <person name="Brettin T.S."/>
        </authorList>
    </citation>
    <scope>NUCLEOTIDE SEQUENCE [LARGE SCALE GENOMIC DNA]</scope>
    <source>
        <strain>Eklund 17B / Type B</strain>
    </source>
</reference>
<dbReference type="EC" id="6.5.1.2" evidence="1"/>
<dbReference type="EMBL" id="CP001056">
    <property type="protein sequence ID" value="ACD22265.1"/>
    <property type="molecule type" value="Genomic_DNA"/>
</dbReference>
<dbReference type="SMR" id="B2TIZ7"/>
<dbReference type="KEGG" id="cbk:CLL_A0409"/>
<dbReference type="HOGENOM" id="CLU_007764_2_1_9"/>
<dbReference type="Proteomes" id="UP000001195">
    <property type="component" value="Chromosome"/>
</dbReference>
<dbReference type="GO" id="GO:0005829">
    <property type="term" value="C:cytosol"/>
    <property type="evidence" value="ECO:0007669"/>
    <property type="project" value="TreeGrafter"/>
</dbReference>
<dbReference type="GO" id="GO:0003677">
    <property type="term" value="F:DNA binding"/>
    <property type="evidence" value="ECO:0007669"/>
    <property type="project" value="InterPro"/>
</dbReference>
<dbReference type="GO" id="GO:0003911">
    <property type="term" value="F:DNA ligase (NAD+) activity"/>
    <property type="evidence" value="ECO:0007669"/>
    <property type="project" value="UniProtKB-UniRule"/>
</dbReference>
<dbReference type="GO" id="GO:0046872">
    <property type="term" value="F:metal ion binding"/>
    <property type="evidence" value="ECO:0007669"/>
    <property type="project" value="UniProtKB-KW"/>
</dbReference>
<dbReference type="GO" id="GO:0006281">
    <property type="term" value="P:DNA repair"/>
    <property type="evidence" value="ECO:0007669"/>
    <property type="project" value="UniProtKB-KW"/>
</dbReference>
<dbReference type="GO" id="GO:0006260">
    <property type="term" value="P:DNA replication"/>
    <property type="evidence" value="ECO:0007669"/>
    <property type="project" value="UniProtKB-KW"/>
</dbReference>
<dbReference type="CDD" id="cd17748">
    <property type="entry name" value="BRCT_DNA_ligase_like"/>
    <property type="match status" value="1"/>
</dbReference>
<dbReference type="CDD" id="cd09897">
    <property type="entry name" value="H3TH_FEN1-XPG-like"/>
    <property type="match status" value="1"/>
</dbReference>
<dbReference type="CDD" id="cd00114">
    <property type="entry name" value="LIGANc"/>
    <property type="match status" value="1"/>
</dbReference>
<dbReference type="FunFam" id="1.10.150.20:FF:000006">
    <property type="entry name" value="DNA ligase"/>
    <property type="match status" value="1"/>
</dbReference>
<dbReference type="FunFam" id="1.10.150.20:FF:000007">
    <property type="entry name" value="DNA ligase"/>
    <property type="match status" value="1"/>
</dbReference>
<dbReference type="FunFam" id="2.40.50.140:FF:000012">
    <property type="entry name" value="DNA ligase"/>
    <property type="match status" value="1"/>
</dbReference>
<dbReference type="Gene3D" id="1.10.150.20">
    <property type="entry name" value="5' to 3' exonuclease, C-terminal subdomain"/>
    <property type="match status" value="2"/>
</dbReference>
<dbReference type="Gene3D" id="3.40.50.10190">
    <property type="entry name" value="BRCT domain"/>
    <property type="match status" value="1"/>
</dbReference>
<dbReference type="Gene3D" id="3.30.470.30">
    <property type="entry name" value="DNA ligase/mRNA capping enzyme"/>
    <property type="match status" value="1"/>
</dbReference>
<dbReference type="Gene3D" id="1.10.287.610">
    <property type="entry name" value="Helix hairpin bin"/>
    <property type="match status" value="1"/>
</dbReference>
<dbReference type="Gene3D" id="2.40.50.140">
    <property type="entry name" value="Nucleic acid-binding proteins"/>
    <property type="match status" value="1"/>
</dbReference>
<dbReference type="HAMAP" id="MF_01588">
    <property type="entry name" value="DNA_ligase_A"/>
    <property type="match status" value="1"/>
</dbReference>
<dbReference type="InterPro" id="IPR001357">
    <property type="entry name" value="BRCT_dom"/>
</dbReference>
<dbReference type="InterPro" id="IPR036420">
    <property type="entry name" value="BRCT_dom_sf"/>
</dbReference>
<dbReference type="InterPro" id="IPR041663">
    <property type="entry name" value="DisA/LigA_HHH"/>
</dbReference>
<dbReference type="InterPro" id="IPR001679">
    <property type="entry name" value="DNA_ligase"/>
</dbReference>
<dbReference type="InterPro" id="IPR013839">
    <property type="entry name" value="DNAligase_adenylation"/>
</dbReference>
<dbReference type="InterPro" id="IPR013840">
    <property type="entry name" value="DNAligase_N"/>
</dbReference>
<dbReference type="InterPro" id="IPR003583">
    <property type="entry name" value="Hlx-hairpin-Hlx_DNA-bd_motif"/>
</dbReference>
<dbReference type="InterPro" id="IPR012340">
    <property type="entry name" value="NA-bd_OB-fold"/>
</dbReference>
<dbReference type="InterPro" id="IPR004150">
    <property type="entry name" value="NAD_DNA_ligase_OB"/>
</dbReference>
<dbReference type="InterPro" id="IPR010994">
    <property type="entry name" value="RuvA_2-like"/>
</dbReference>
<dbReference type="NCBIfam" id="TIGR00575">
    <property type="entry name" value="dnlj"/>
    <property type="match status" value="1"/>
</dbReference>
<dbReference type="NCBIfam" id="NF005932">
    <property type="entry name" value="PRK07956.1"/>
    <property type="match status" value="1"/>
</dbReference>
<dbReference type="PANTHER" id="PTHR23389">
    <property type="entry name" value="CHROMOSOME TRANSMISSION FIDELITY FACTOR 18"/>
    <property type="match status" value="1"/>
</dbReference>
<dbReference type="PANTHER" id="PTHR23389:SF9">
    <property type="entry name" value="DNA LIGASE"/>
    <property type="match status" value="1"/>
</dbReference>
<dbReference type="Pfam" id="PF00533">
    <property type="entry name" value="BRCT"/>
    <property type="match status" value="1"/>
</dbReference>
<dbReference type="Pfam" id="PF01653">
    <property type="entry name" value="DNA_ligase_aden"/>
    <property type="match status" value="1"/>
</dbReference>
<dbReference type="Pfam" id="PF03120">
    <property type="entry name" value="DNA_ligase_OB"/>
    <property type="match status" value="1"/>
</dbReference>
<dbReference type="Pfam" id="PF12826">
    <property type="entry name" value="HHH_2"/>
    <property type="match status" value="1"/>
</dbReference>
<dbReference type="Pfam" id="PF14520">
    <property type="entry name" value="HHH_5"/>
    <property type="match status" value="1"/>
</dbReference>
<dbReference type="PIRSF" id="PIRSF001604">
    <property type="entry name" value="LigA"/>
    <property type="match status" value="1"/>
</dbReference>
<dbReference type="SMART" id="SM00292">
    <property type="entry name" value="BRCT"/>
    <property type="match status" value="1"/>
</dbReference>
<dbReference type="SMART" id="SM00278">
    <property type="entry name" value="HhH1"/>
    <property type="match status" value="4"/>
</dbReference>
<dbReference type="SMART" id="SM00532">
    <property type="entry name" value="LIGANc"/>
    <property type="match status" value="1"/>
</dbReference>
<dbReference type="SUPFAM" id="SSF52113">
    <property type="entry name" value="BRCT domain"/>
    <property type="match status" value="1"/>
</dbReference>
<dbReference type="SUPFAM" id="SSF56091">
    <property type="entry name" value="DNA ligase/mRNA capping enzyme, catalytic domain"/>
    <property type="match status" value="1"/>
</dbReference>
<dbReference type="SUPFAM" id="SSF50249">
    <property type="entry name" value="Nucleic acid-binding proteins"/>
    <property type="match status" value="1"/>
</dbReference>
<dbReference type="SUPFAM" id="SSF47781">
    <property type="entry name" value="RuvA domain 2-like"/>
    <property type="match status" value="1"/>
</dbReference>
<dbReference type="PROSITE" id="PS50172">
    <property type="entry name" value="BRCT"/>
    <property type="match status" value="1"/>
</dbReference>
<protein>
    <recommendedName>
        <fullName evidence="1">DNA ligase</fullName>
        <ecNumber evidence="1">6.5.1.2</ecNumber>
    </recommendedName>
    <alternativeName>
        <fullName evidence="1">Polydeoxyribonucleotide synthase [NAD(+)]</fullName>
    </alternativeName>
</protein>
<keyword id="KW-0227">DNA damage</keyword>
<keyword id="KW-0234">DNA repair</keyword>
<keyword id="KW-0235">DNA replication</keyword>
<keyword id="KW-0436">Ligase</keyword>
<keyword id="KW-0460">Magnesium</keyword>
<keyword id="KW-0464">Manganese</keyword>
<keyword id="KW-0479">Metal-binding</keyword>
<keyword id="KW-0520">NAD</keyword>
<keyword id="KW-0862">Zinc</keyword>
<sequence>MVDKIERIKELVEILNKYSYDYYVLDNPSVSDKDYDKEYDELKLLEKETGFVLPYSPTLRIGDVVLQGFNKYTHKGKLWSLDKAQSLDEIKDWHNRNIKFVNEMRAQGEDLPDLKYIATKKFDGLTVNLTYNKGGMLEVSATRGNGEIGENVTSQVKTIKSIPLKLQENDDLFEVHGEAIMTQEAFEKYNASADIPLKNLRNGAAGALRNLNIKETARRDLSAFFYDVGYKEGYQFKTYLEMMDFIKEKGLPIDEYLKVCTSIDDIKKEIEYIEKIRFDLNYDIDGLVIAIDDIRTRELLGYTVKYPKWAIAYKFEAQEATTKLLDVEWNVGRSGRIGPTAILEPVELAGVTVKRATLNNMDDIKRKGVRIGADVFVRRSNDVIPEIMGTLENTLENSEEICPPTECPACGSHVVLNGAHYFCENTLSCKPQLVKTIVHYASRDAMNIAGFSEKTAEQLFEKLNIKSISDLYKLKKEDLINLEKFGEKKSENLLNAIEKSKDCKLYSFIYALGIPNVGVKTAKDIVNKFKSIDGLKNATFEELVSVQDVGDIVAQDVIEFFKEEKVINTIDELLNLGVNPIFDEVKIVESIFKDKTVVTTGTLQNYSRTEIKTKLESLGAKVSGSVSKKTDYVIAGESAGSKLTKAEELGVKIISEEEFEKMLGRES</sequence>
<organism>
    <name type="scientific">Clostridium botulinum (strain Eklund 17B / Type B)</name>
    <dbReference type="NCBI Taxonomy" id="935198"/>
    <lineage>
        <taxon>Bacteria</taxon>
        <taxon>Bacillati</taxon>
        <taxon>Bacillota</taxon>
        <taxon>Clostridia</taxon>
        <taxon>Eubacteriales</taxon>
        <taxon>Clostridiaceae</taxon>
        <taxon>Clostridium</taxon>
    </lineage>
</organism>
<feature type="chain" id="PRO_0000380341" description="DNA ligase">
    <location>
        <begin position="1"/>
        <end position="667"/>
    </location>
</feature>
<feature type="domain" description="BRCT" evidence="1">
    <location>
        <begin position="587"/>
        <end position="667"/>
    </location>
</feature>
<feature type="active site" description="N6-AMP-lysine intermediate" evidence="1">
    <location>
        <position position="121"/>
    </location>
</feature>
<feature type="binding site" evidence="1">
    <location>
        <begin position="32"/>
        <end position="36"/>
    </location>
    <ligand>
        <name>NAD(+)</name>
        <dbReference type="ChEBI" id="CHEBI:57540"/>
    </ligand>
</feature>
<feature type="binding site" evidence="1">
    <location>
        <begin position="80"/>
        <end position="81"/>
    </location>
    <ligand>
        <name>NAD(+)</name>
        <dbReference type="ChEBI" id="CHEBI:57540"/>
    </ligand>
</feature>
<feature type="binding site" evidence="1">
    <location>
        <position position="143"/>
    </location>
    <ligand>
        <name>NAD(+)</name>
        <dbReference type="ChEBI" id="CHEBI:57540"/>
    </ligand>
</feature>
<feature type="binding site" evidence="1">
    <location>
        <position position="178"/>
    </location>
    <ligand>
        <name>NAD(+)</name>
        <dbReference type="ChEBI" id="CHEBI:57540"/>
    </ligand>
</feature>
<feature type="binding site" evidence="1">
    <location>
        <position position="314"/>
    </location>
    <ligand>
        <name>NAD(+)</name>
        <dbReference type="ChEBI" id="CHEBI:57540"/>
    </ligand>
</feature>
<feature type="binding site" evidence="1">
    <location>
        <position position="407"/>
    </location>
    <ligand>
        <name>Zn(2+)</name>
        <dbReference type="ChEBI" id="CHEBI:29105"/>
    </ligand>
</feature>
<feature type="binding site" evidence="1">
    <location>
        <position position="410"/>
    </location>
    <ligand>
        <name>Zn(2+)</name>
        <dbReference type="ChEBI" id="CHEBI:29105"/>
    </ligand>
</feature>
<feature type="binding site" evidence="1">
    <location>
        <position position="423"/>
    </location>
    <ligand>
        <name>Zn(2+)</name>
        <dbReference type="ChEBI" id="CHEBI:29105"/>
    </ligand>
</feature>
<feature type="binding site" evidence="1">
    <location>
        <position position="429"/>
    </location>
    <ligand>
        <name>Zn(2+)</name>
        <dbReference type="ChEBI" id="CHEBI:29105"/>
    </ligand>
</feature>
<evidence type="ECO:0000255" key="1">
    <source>
        <dbReference type="HAMAP-Rule" id="MF_01588"/>
    </source>
</evidence>
<gene>
    <name evidence="1" type="primary">ligA</name>
    <name type="ordered locus">CLL_A0409</name>
</gene>
<comment type="function">
    <text evidence="1">DNA ligase that catalyzes the formation of phosphodiester linkages between 5'-phosphoryl and 3'-hydroxyl groups in double-stranded DNA using NAD as a coenzyme and as the energy source for the reaction. It is essential for DNA replication and repair of damaged DNA.</text>
</comment>
<comment type="catalytic activity">
    <reaction evidence="1">
        <text>NAD(+) + (deoxyribonucleotide)n-3'-hydroxyl + 5'-phospho-(deoxyribonucleotide)m = (deoxyribonucleotide)n+m + AMP + beta-nicotinamide D-nucleotide.</text>
        <dbReference type="EC" id="6.5.1.2"/>
    </reaction>
</comment>
<comment type="cofactor">
    <cofactor evidence="1">
        <name>Mg(2+)</name>
        <dbReference type="ChEBI" id="CHEBI:18420"/>
    </cofactor>
    <cofactor evidence="1">
        <name>Mn(2+)</name>
        <dbReference type="ChEBI" id="CHEBI:29035"/>
    </cofactor>
</comment>
<comment type="similarity">
    <text evidence="1">Belongs to the NAD-dependent DNA ligase family. LigA subfamily.</text>
</comment>
<name>DNLJ_CLOBB</name>
<proteinExistence type="inferred from homology"/>